<evidence type="ECO:0000250" key="1"/>
<evidence type="ECO:0000255" key="2">
    <source>
        <dbReference type="HAMAP-Rule" id="MF_00103"/>
    </source>
</evidence>
<proteinExistence type="inferred from homology"/>
<dbReference type="EC" id="3.2.2.23" evidence="2"/>
<dbReference type="EC" id="4.2.99.18" evidence="2"/>
<dbReference type="EMBL" id="AE017262">
    <property type="protein sequence ID" value="AAT04361.1"/>
    <property type="molecule type" value="Genomic_DNA"/>
</dbReference>
<dbReference type="RefSeq" id="WP_003725690.1">
    <property type="nucleotide sequence ID" value="NC_002973.6"/>
</dbReference>
<dbReference type="SMR" id="Q71ZA3"/>
<dbReference type="KEGG" id="lmf:LMOf2365_1586"/>
<dbReference type="HOGENOM" id="CLU_038423_1_2_9"/>
<dbReference type="GO" id="GO:0034039">
    <property type="term" value="F:8-oxo-7,8-dihydroguanine DNA N-glycosylase activity"/>
    <property type="evidence" value="ECO:0007669"/>
    <property type="project" value="TreeGrafter"/>
</dbReference>
<dbReference type="GO" id="GO:0140078">
    <property type="term" value="F:class I DNA-(apurinic or apyrimidinic site) endonuclease activity"/>
    <property type="evidence" value="ECO:0007669"/>
    <property type="project" value="UniProtKB-EC"/>
</dbReference>
<dbReference type="GO" id="GO:0003684">
    <property type="term" value="F:damaged DNA binding"/>
    <property type="evidence" value="ECO:0007669"/>
    <property type="project" value="InterPro"/>
</dbReference>
<dbReference type="GO" id="GO:0008270">
    <property type="term" value="F:zinc ion binding"/>
    <property type="evidence" value="ECO:0007669"/>
    <property type="project" value="UniProtKB-UniRule"/>
</dbReference>
<dbReference type="GO" id="GO:0006284">
    <property type="term" value="P:base-excision repair"/>
    <property type="evidence" value="ECO:0007669"/>
    <property type="project" value="InterPro"/>
</dbReference>
<dbReference type="CDD" id="cd08966">
    <property type="entry name" value="EcFpg-like_N"/>
    <property type="match status" value="1"/>
</dbReference>
<dbReference type="FunFam" id="1.10.8.50:FF:000003">
    <property type="entry name" value="Formamidopyrimidine-DNA glycosylase"/>
    <property type="match status" value="1"/>
</dbReference>
<dbReference type="FunFam" id="3.20.190.10:FF:000001">
    <property type="entry name" value="Formamidopyrimidine-DNA glycosylase"/>
    <property type="match status" value="1"/>
</dbReference>
<dbReference type="Gene3D" id="1.10.8.50">
    <property type="match status" value="1"/>
</dbReference>
<dbReference type="Gene3D" id="3.20.190.10">
    <property type="entry name" value="MutM-like, N-terminal"/>
    <property type="match status" value="1"/>
</dbReference>
<dbReference type="HAMAP" id="MF_00103">
    <property type="entry name" value="Fapy_DNA_glycosyl"/>
    <property type="match status" value="1"/>
</dbReference>
<dbReference type="InterPro" id="IPR015886">
    <property type="entry name" value="DNA_glyclase/AP_lyase_DNA-bd"/>
</dbReference>
<dbReference type="InterPro" id="IPR015887">
    <property type="entry name" value="DNA_glyclase_Znf_dom_DNA_BS"/>
</dbReference>
<dbReference type="InterPro" id="IPR020629">
    <property type="entry name" value="Formamido-pyr_DNA_Glyclase"/>
</dbReference>
<dbReference type="InterPro" id="IPR012319">
    <property type="entry name" value="FPG_cat"/>
</dbReference>
<dbReference type="InterPro" id="IPR035937">
    <property type="entry name" value="MutM-like_N-ter"/>
</dbReference>
<dbReference type="InterPro" id="IPR010979">
    <property type="entry name" value="Ribosomal_uS13-like_H2TH"/>
</dbReference>
<dbReference type="InterPro" id="IPR000214">
    <property type="entry name" value="Znf_DNA_glyclase/AP_lyase"/>
</dbReference>
<dbReference type="InterPro" id="IPR010663">
    <property type="entry name" value="Znf_FPG/IleRS"/>
</dbReference>
<dbReference type="NCBIfam" id="TIGR00577">
    <property type="entry name" value="fpg"/>
    <property type="match status" value="1"/>
</dbReference>
<dbReference type="NCBIfam" id="NF002211">
    <property type="entry name" value="PRK01103.1"/>
    <property type="match status" value="1"/>
</dbReference>
<dbReference type="PANTHER" id="PTHR22993">
    <property type="entry name" value="FORMAMIDOPYRIMIDINE-DNA GLYCOSYLASE"/>
    <property type="match status" value="1"/>
</dbReference>
<dbReference type="PANTHER" id="PTHR22993:SF9">
    <property type="entry name" value="FORMAMIDOPYRIMIDINE-DNA GLYCOSYLASE"/>
    <property type="match status" value="1"/>
</dbReference>
<dbReference type="Pfam" id="PF01149">
    <property type="entry name" value="Fapy_DNA_glyco"/>
    <property type="match status" value="1"/>
</dbReference>
<dbReference type="Pfam" id="PF06831">
    <property type="entry name" value="H2TH"/>
    <property type="match status" value="1"/>
</dbReference>
<dbReference type="Pfam" id="PF06827">
    <property type="entry name" value="zf-FPG_IleRS"/>
    <property type="match status" value="1"/>
</dbReference>
<dbReference type="SMART" id="SM00898">
    <property type="entry name" value="Fapy_DNA_glyco"/>
    <property type="match status" value="1"/>
</dbReference>
<dbReference type="SMART" id="SM01232">
    <property type="entry name" value="H2TH"/>
    <property type="match status" value="1"/>
</dbReference>
<dbReference type="SUPFAM" id="SSF57716">
    <property type="entry name" value="Glucocorticoid receptor-like (DNA-binding domain)"/>
    <property type="match status" value="1"/>
</dbReference>
<dbReference type="SUPFAM" id="SSF81624">
    <property type="entry name" value="N-terminal domain of MutM-like DNA repair proteins"/>
    <property type="match status" value="1"/>
</dbReference>
<dbReference type="SUPFAM" id="SSF46946">
    <property type="entry name" value="S13-like H2TH domain"/>
    <property type="match status" value="1"/>
</dbReference>
<dbReference type="PROSITE" id="PS51068">
    <property type="entry name" value="FPG_CAT"/>
    <property type="match status" value="1"/>
</dbReference>
<dbReference type="PROSITE" id="PS01242">
    <property type="entry name" value="ZF_FPG_1"/>
    <property type="match status" value="1"/>
</dbReference>
<dbReference type="PROSITE" id="PS51066">
    <property type="entry name" value="ZF_FPG_2"/>
    <property type="match status" value="1"/>
</dbReference>
<reference key="1">
    <citation type="journal article" date="2004" name="Nucleic Acids Res.">
        <title>Whole genome comparisons of serotype 4b and 1/2a strains of the food-borne pathogen Listeria monocytogenes reveal new insights into the core genome components of this species.</title>
        <authorList>
            <person name="Nelson K.E."/>
            <person name="Fouts D.E."/>
            <person name="Mongodin E.F."/>
            <person name="Ravel J."/>
            <person name="DeBoy R.T."/>
            <person name="Kolonay J.F."/>
            <person name="Rasko D.A."/>
            <person name="Angiuoli S.V."/>
            <person name="Gill S.R."/>
            <person name="Paulsen I.T."/>
            <person name="Peterson J.D."/>
            <person name="White O."/>
            <person name="Nelson W.C."/>
            <person name="Nierman W.C."/>
            <person name="Beanan M.J."/>
            <person name="Brinkac L.M."/>
            <person name="Daugherty S.C."/>
            <person name="Dodson R.J."/>
            <person name="Durkin A.S."/>
            <person name="Madupu R."/>
            <person name="Haft D.H."/>
            <person name="Selengut J."/>
            <person name="Van Aken S.E."/>
            <person name="Khouri H.M."/>
            <person name="Fedorova N."/>
            <person name="Forberger H.A."/>
            <person name="Tran B."/>
            <person name="Kathariou S."/>
            <person name="Wonderling L.D."/>
            <person name="Uhlich G.A."/>
            <person name="Bayles D.O."/>
            <person name="Luchansky J.B."/>
            <person name="Fraser C.M."/>
        </authorList>
    </citation>
    <scope>NUCLEOTIDE SEQUENCE [LARGE SCALE GENOMIC DNA]</scope>
    <source>
        <strain>F2365</strain>
    </source>
</reference>
<accession>Q71ZA3</accession>
<organism>
    <name type="scientific">Listeria monocytogenes serotype 4b (strain F2365)</name>
    <dbReference type="NCBI Taxonomy" id="265669"/>
    <lineage>
        <taxon>Bacteria</taxon>
        <taxon>Bacillati</taxon>
        <taxon>Bacillota</taxon>
        <taxon>Bacilli</taxon>
        <taxon>Bacillales</taxon>
        <taxon>Listeriaceae</taxon>
        <taxon>Listeria</taxon>
    </lineage>
</organism>
<comment type="function">
    <text evidence="2">Involved in base excision repair of DNA damaged by oxidation or by mutagenic agents. Acts as a DNA glycosylase that recognizes and removes damaged bases. Has a preference for oxidized purines, such as 7,8-dihydro-8-oxoguanine (8-oxoG). Has AP (apurinic/apyrimidinic) lyase activity and introduces nicks in the DNA strand. Cleaves the DNA backbone by beta-delta elimination to generate a single-strand break at the site of the removed base with both 3'- and 5'-phosphates.</text>
</comment>
<comment type="catalytic activity">
    <reaction evidence="2">
        <text>Hydrolysis of DNA containing ring-opened 7-methylguanine residues, releasing 2,6-diamino-4-hydroxy-5-(N-methyl)formamidopyrimidine.</text>
        <dbReference type="EC" id="3.2.2.23"/>
    </reaction>
</comment>
<comment type="catalytic activity">
    <reaction evidence="2">
        <text>2'-deoxyribonucleotide-(2'-deoxyribose 5'-phosphate)-2'-deoxyribonucleotide-DNA = a 3'-end 2'-deoxyribonucleotide-(2,3-dehydro-2,3-deoxyribose 5'-phosphate)-DNA + a 5'-end 5'-phospho-2'-deoxyribonucleoside-DNA + H(+)</text>
        <dbReference type="Rhea" id="RHEA:66592"/>
        <dbReference type="Rhea" id="RHEA-COMP:13180"/>
        <dbReference type="Rhea" id="RHEA-COMP:16897"/>
        <dbReference type="Rhea" id="RHEA-COMP:17067"/>
        <dbReference type="ChEBI" id="CHEBI:15378"/>
        <dbReference type="ChEBI" id="CHEBI:136412"/>
        <dbReference type="ChEBI" id="CHEBI:157695"/>
        <dbReference type="ChEBI" id="CHEBI:167181"/>
        <dbReference type="EC" id="4.2.99.18"/>
    </reaction>
</comment>
<comment type="cofactor">
    <cofactor evidence="2">
        <name>Zn(2+)</name>
        <dbReference type="ChEBI" id="CHEBI:29105"/>
    </cofactor>
    <text evidence="2">Binds 1 zinc ion per subunit.</text>
</comment>
<comment type="subunit">
    <text evidence="2">Monomer.</text>
</comment>
<comment type="similarity">
    <text evidence="2">Belongs to the FPG family.</text>
</comment>
<keyword id="KW-0227">DNA damage</keyword>
<keyword id="KW-0234">DNA repair</keyword>
<keyword id="KW-0238">DNA-binding</keyword>
<keyword id="KW-0326">Glycosidase</keyword>
<keyword id="KW-0378">Hydrolase</keyword>
<keyword id="KW-0456">Lyase</keyword>
<keyword id="KW-0479">Metal-binding</keyword>
<keyword id="KW-0511">Multifunctional enzyme</keyword>
<keyword id="KW-0862">Zinc</keyword>
<keyword id="KW-0863">Zinc-finger</keyword>
<protein>
    <recommendedName>
        <fullName evidence="2">Formamidopyrimidine-DNA glycosylase</fullName>
        <shortName evidence="2">Fapy-DNA glycosylase</shortName>
        <ecNumber evidence="2">3.2.2.23</ecNumber>
    </recommendedName>
    <alternativeName>
        <fullName evidence="2">DNA-(apurinic or apyrimidinic site) lyase MutM</fullName>
        <shortName evidence="2">AP lyase MutM</shortName>
        <ecNumber evidence="2">4.2.99.18</ecNumber>
    </alternativeName>
</protein>
<feature type="initiator methionine" description="Removed" evidence="1">
    <location>
        <position position="1"/>
    </location>
</feature>
<feature type="chain" id="PRO_0000170834" description="Formamidopyrimidine-DNA glycosylase">
    <location>
        <begin position="2"/>
        <end position="273"/>
    </location>
</feature>
<feature type="zinc finger region" description="FPG-type" evidence="2">
    <location>
        <begin position="239"/>
        <end position="273"/>
    </location>
</feature>
<feature type="active site" description="Schiff-base intermediate with DNA" evidence="2">
    <location>
        <position position="2"/>
    </location>
</feature>
<feature type="active site" description="Proton donor" evidence="2">
    <location>
        <position position="3"/>
    </location>
</feature>
<feature type="active site" description="Proton donor; for beta-elimination activity" evidence="2">
    <location>
        <position position="59"/>
    </location>
</feature>
<feature type="active site" description="Proton donor; for delta-elimination activity" evidence="2">
    <location>
        <position position="263"/>
    </location>
</feature>
<feature type="binding site" evidence="2">
    <location>
        <position position="92"/>
    </location>
    <ligand>
        <name>DNA</name>
        <dbReference type="ChEBI" id="CHEBI:16991"/>
    </ligand>
</feature>
<feature type="binding site" evidence="2">
    <location>
        <position position="111"/>
    </location>
    <ligand>
        <name>DNA</name>
        <dbReference type="ChEBI" id="CHEBI:16991"/>
    </ligand>
</feature>
<name>FPG_LISMF</name>
<sequence>MPEMPEVENVRATLQELVPGKKIDQVIVRVPKMIVSTPPDEFVHMLVGQEIEGVRRRGKFLLFDLTNCTILSHLRMEGKFRLMDEKEEVSKHTHIIFHFEDHTELRFLDVRKFGTMEVTNKYGEGETRSIKKLGPEPLTQAFTSTDFATGVKKTSRAIKTALLDQKLVAGVGNIYADEICFEAKVRPERAANSLSDKEIKRIFEATKSIMTEAVALGGSTVRTYVNSQGKLGQYQDKLKVYGKTDEPCVVCGKPIEKIKLNGRGTHFCPNCQK</sequence>
<gene>
    <name evidence="2" type="primary">mutM</name>
    <name evidence="2" type="synonym">fpg</name>
    <name type="ordered locus">LMOf2365_1586</name>
</gene>